<feature type="chain" id="PRO_0000267606" description="Sentrin-specific protease 2">
    <location>
        <begin position="1"/>
        <end position="589"/>
    </location>
</feature>
<feature type="region of interest" description="Axin-binding" evidence="2">
    <location>
        <begin position="71"/>
        <end position="382"/>
    </location>
</feature>
<feature type="region of interest" description="Disordered" evidence="4">
    <location>
        <begin position="148"/>
        <end position="179"/>
    </location>
</feature>
<feature type="region of interest" description="Disordered" evidence="4">
    <location>
        <begin position="191"/>
        <end position="210"/>
    </location>
</feature>
<feature type="region of interest" description="Protease" evidence="2">
    <location>
        <begin position="395"/>
        <end position="559"/>
    </location>
</feature>
<feature type="short sequence motif" description="Nuclear localization signal" evidence="3">
    <location>
        <begin position="28"/>
        <end position="31"/>
    </location>
</feature>
<feature type="short sequence motif" description="Nuclear localization signal" evidence="3">
    <location>
        <begin position="46"/>
        <end position="51"/>
    </location>
</feature>
<feature type="short sequence motif" description="Nuclear export signal" evidence="2">
    <location>
        <begin position="317"/>
        <end position="332"/>
    </location>
</feature>
<feature type="active site" evidence="2">
    <location>
        <position position="478"/>
    </location>
</feature>
<feature type="active site" evidence="2">
    <location>
        <position position="495"/>
    </location>
</feature>
<feature type="active site" description="Nucleophile" evidence="2">
    <location>
        <position position="548"/>
    </location>
</feature>
<feature type="modified residue" description="Phosphoserine" evidence="2">
    <location>
        <position position="32"/>
    </location>
</feature>
<feature type="modified residue" description="Phosphoserine" evidence="2">
    <location>
        <position position="333"/>
    </location>
</feature>
<feature type="modified residue" description="Phosphoserine" evidence="2">
    <location>
        <position position="344"/>
    </location>
</feature>
<feature type="sequence conflict" description="In Ref. 1; CAH90084." evidence="5" ref="1">
    <original>N</original>
    <variation>NF</variation>
    <location>
        <position position="417"/>
    </location>
</feature>
<sequence length="589" mass="68057">MYRWLVRILGTIFRFCDRSVPPARALLKRRRSDSTLFSTVDTDEIPAKRPRLDCFIHQVKNSLYNAASLFGFPFQLTTKPMVTSACNGTRNVAPSGEVFSNPSSCELTGSGSWNNMLKLGNKSPNGISDYPKIRVTVTRDQPRRVLPSFGFTLNSEGYNRRPGGRRHSKGNPESSLMWKPQEQAVTEMISEESGKGLRRPHRTVEEGVQKEEREKYRKLLERLKESGHGNSVCPVTSNYHSSQRSQMDTLKTKGWGEEQNHGVKTTQFVPKQYRLVETRGPLCSLRSEKRCSKGKITDTEKMVGIRFENESRRGYQLEPDLSEEVSARLRLGSGSNGLLRRKVSIIETKEKNCSGKERDRRTDDLLELTEDMEKEISNALGHGPQDEILSSAFKLRITRGDIQTLKNYHWLNDEVINFYMNLLVERNKKQGYPALHVFSTFFYPKLKSGGYQAVKRWTKGVNLFEQEIILVPIHRKVHWSLVVIDLRKKCLKYLDSMGQKGHRICEILLQYLQDESKTKRNIDLNLLEWTHYSMKPHEIPQQLNGSDCGMFTCKYADYISRDKPITFTQHQMPLFRKKMVWEILHQQLL</sequence>
<proteinExistence type="evidence at transcript level"/>
<accession>Q5R7K7</accession>
<accession>Q5RDS3</accession>
<organism>
    <name type="scientific">Pongo abelii</name>
    <name type="common">Sumatran orangutan</name>
    <name type="synonym">Pongo pygmaeus abelii</name>
    <dbReference type="NCBI Taxonomy" id="9601"/>
    <lineage>
        <taxon>Eukaryota</taxon>
        <taxon>Metazoa</taxon>
        <taxon>Chordata</taxon>
        <taxon>Craniata</taxon>
        <taxon>Vertebrata</taxon>
        <taxon>Euteleostomi</taxon>
        <taxon>Mammalia</taxon>
        <taxon>Eutheria</taxon>
        <taxon>Euarchontoglires</taxon>
        <taxon>Primates</taxon>
        <taxon>Haplorrhini</taxon>
        <taxon>Catarrhini</taxon>
        <taxon>Hominidae</taxon>
        <taxon>Pongo</taxon>
    </lineage>
</organism>
<evidence type="ECO:0000250" key="1">
    <source>
        <dbReference type="UniProtKB" id="Q91ZX6"/>
    </source>
</evidence>
<evidence type="ECO:0000250" key="2">
    <source>
        <dbReference type="UniProtKB" id="Q9HC62"/>
    </source>
</evidence>
<evidence type="ECO:0000255" key="3"/>
<evidence type="ECO:0000256" key="4">
    <source>
        <dbReference type="SAM" id="MobiDB-lite"/>
    </source>
</evidence>
<evidence type="ECO:0000305" key="5"/>
<comment type="function">
    <text evidence="1 2">Protease that catalyzes two essential functions in the SUMO pathway. The first is the hydrolysis of an alpha-linked peptide bond at the C-terminal end of the small ubiquitin-like modifier (SUMO) propeptides, SUMO1, SUMO2 and SUMO3 leading to the mature form of the proteins. The second is the deconjugation of SUMO1, SUMO2 and SUMO3 from targeted proteins, by cleaving an epsilon-linked peptide bond between the C-terminal glycine of the mature SUMO and the lysine epsilon-amino group of the target protein (By similarity). May down-regulate CTNNB1 levels and thereby modulate the Wnt pathway (By similarity). Deconjugates SUMO2 from MTA1. Plays a dynamic role in adipogenesis by desumoylating and promoting the stabilization of CEBPB (By similarity). Acts as a regulator of the cGAS-STING pathway by catalyzing desumoylation of CGAS and STING1 during the late phase of viral infection (By similarity).</text>
</comment>
<comment type="subunit">
    <text evidence="2">Binds to SUMO2 and SUMO3. Interacts with the C-terminal domain of NUP153 via its N-terminus. Interacts with MTA1.</text>
</comment>
<comment type="subcellular location">
    <subcellularLocation>
        <location evidence="2">Nucleus</location>
        <location evidence="2">Nuclear pore complex</location>
    </subcellularLocation>
    <subcellularLocation>
        <location evidence="2">Nucleus membrane</location>
        <topology evidence="2">Peripheral membrane protein</topology>
        <orientation evidence="2">Nucleoplasmic side</orientation>
    </subcellularLocation>
    <subcellularLocation>
        <location evidence="2">Cytoplasm</location>
    </subcellularLocation>
    <text evidence="2">Shuttles between cytoplasm and nucleus.</text>
</comment>
<comment type="domain">
    <text evidence="2">The N-terminus is necessary and sufficient for nuclear envelope targeting.</text>
</comment>
<comment type="PTM">
    <text evidence="2">Polyubiquitinated; which leads to proteasomal degradation.</text>
</comment>
<comment type="similarity">
    <text evidence="5">Belongs to the peptidase C48 family.</text>
</comment>
<keyword id="KW-0963">Cytoplasm</keyword>
<keyword id="KW-0378">Hydrolase</keyword>
<keyword id="KW-0472">Membrane</keyword>
<keyword id="KW-0509">mRNA transport</keyword>
<keyword id="KW-0906">Nuclear pore complex</keyword>
<keyword id="KW-0539">Nucleus</keyword>
<keyword id="KW-0597">Phosphoprotein</keyword>
<keyword id="KW-0645">Protease</keyword>
<keyword id="KW-0653">Protein transport</keyword>
<keyword id="KW-1185">Reference proteome</keyword>
<keyword id="KW-0788">Thiol protease</keyword>
<keyword id="KW-0811">Translocation</keyword>
<keyword id="KW-0813">Transport</keyword>
<keyword id="KW-0832">Ubl conjugation</keyword>
<keyword id="KW-0833">Ubl conjugation pathway</keyword>
<keyword id="KW-0879">Wnt signaling pathway</keyword>
<protein>
    <recommendedName>
        <fullName evidence="5">Sentrin-specific protease 2</fullName>
        <ecNumber evidence="2">3.4.22.-</ecNumber>
    </recommendedName>
    <alternativeName>
        <fullName>Sentrin/SUMO-specific protease SENP2</fullName>
    </alternativeName>
</protein>
<reference key="1">
    <citation type="submission" date="2004-11" db="EMBL/GenBank/DDBJ databases">
        <authorList>
            <consortium name="The German cDNA consortium"/>
        </authorList>
    </citation>
    <scope>NUCLEOTIDE SEQUENCE [LARGE SCALE MRNA]</scope>
    <source>
        <tissue>Brain cortex</tissue>
    </source>
</reference>
<dbReference type="EC" id="3.4.22.-" evidence="2"/>
<dbReference type="EMBL" id="CR857828">
    <property type="protein sequence ID" value="CAH90084.1"/>
    <property type="molecule type" value="mRNA"/>
</dbReference>
<dbReference type="EMBL" id="CR860108">
    <property type="protein sequence ID" value="CAH92253.1"/>
    <property type="molecule type" value="mRNA"/>
</dbReference>
<dbReference type="RefSeq" id="NP_001124998.1">
    <property type="nucleotide sequence ID" value="NM_001131526.1"/>
</dbReference>
<dbReference type="SMR" id="Q5R7K7"/>
<dbReference type="FunCoup" id="Q5R7K7">
    <property type="interactions" value="3445"/>
</dbReference>
<dbReference type="STRING" id="9601.ENSPPYP00000016070"/>
<dbReference type="MEROPS" id="C48.007"/>
<dbReference type="GeneID" id="100171874"/>
<dbReference type="KEGG" id="pon:100171874"/>
<dbReference type="CTD" id="59343"/>
<dbReference type="eggNOG" id="KOG0778">
    <property type="taxonomic scope" value="Eukaryota"/>
</dbReference>
<dbReference type="InParanoid" id="Q5R7K7"/>
<dbReference type="OrthoDB" id="1939479at2759"/>
<dbReference type="Proteomes" id="UP000001595">
    <property type="component" value="Unplaced"/>
</dbReference>
<dbReference type="GO" id="GO:0005737">
    <property type="term" value="C:cytoplasm"/>
    <property type="evidence" value="ECO:0007669"/>
    <property type="project" value="UniProtKB-SubCell"/>
</dbReference>
<dbReference type="GO" id="GO:0031965">
    <property type="term" value="C:nuclear membrane"/>
    <property type="evidence" value="ECO:0007669"/>
    <property type="project" value="UniProtKB-SubCell"/>
</dbReference>
<dbReference type="GO" id="GO:0005643">
    <property type="term" value="C:nuclear pore"/>
    <property type="evidence" value="ECO:0007669"/>
    <property type="project" value="UniProtKB-SubCell"/>
</dbReference>
<dbReference type="GO" id="GO:0016929">
    <property type="term" value="F:deSUMOylase activity"/>
    <property type="evidence" value="ECO:0000250"/>
    <property type="project" value="UniProtKB"/>
</dbReference>
<dbReference type="GO" id="GO:0045444">
    <property type="term" value="P:fat cell differentiation"/>
    <property type="evidence" value="ECO:0000250"/>
    <property type="project" value="UniProtKB"/>
</dbReference>
<dbReference type="GO" id="GO:0051028">
    <property type="term" value="P:mRNA transport"/>
    <property type="evidence" value="ECO:0007669"/>
    <property type="project" value="UniProtKB-KW"/>
</dbReference>
<dbReference type="GO" id="GO:0016926">
    <property type="term" value="P:protein desumoylation"/>
    <property type="evidence" value="ECO:0000250"/>
    <property type="project" value="UniProtKB"/>
</dbReference>
<dbReference type="GO" id="GO:0015031">
    <property type="term" value="P:protein transport"/>
    <property type="evidence" value="ECO:0007669"/>
    <property type="project" value="UniProtKB-KW"/>
</dbReference>
<dbReference type="GO" id="GO:0006508">
    <property type="term" value="P:proteolysis"/>
    <property type="evidence" value="ECO:0007669"/>
    <property type="project" value="UniProtKB-KW"/>
</dbReference>
<dbReference type="GO" id="GO:0016055">
    <property type="term" value="P:Wnt signaling pathway"/>
    <property type="evidence" value="ECO:0007669"/>
    <property type="project" value="UniProtKB-KW"/>
</dbReference>
<dbReference type="FunFam" id="3.40.395.10:FF:000001">
    <property type="entry name" value="Sentrin-specific protease 1"/>
    <property type="match status" value="1"/>
</dbReference>
<dbReference type="Gene3D" id="3.40.395.10">
    <property type="entry name" value="Adenoviral Proteinase, Chain A"/>
    <property type="match status" value="1"/>
</dbReference>
<dbReference type="InterPro" id="IPR038765">
    <property type="entry name" value="Papain-like_cys_pep_sf"/>
</dbReference>
<dbReference type="InterPro" id="IPR003653">
    <property type="entry name" value="Peptidase_C48_C"/>
</dbReference>
<dbReference type="PANTHER" id="PTHR12606:SF11">
    <property type="entry name" value="SENTRIN-SPECIFIC PROTEASE 2"/>
    <property type="match status" value="1"/>
</dbReference>
<dbReference type="PANTHER" id="PTHR12606">
    <property type="entry name" value="SENTRIN/SUMO-SPECIFIC PROTEASE"/>
    <property type="match status" value="1"/>
</dbReference>
<dbReference type="Pfam" id="PF02902">
    <property type="entry name" value="Peptidase_C48"/>
    <property type="match status" value="1"/>
</dbReference>
<dbReference type="SUPFAM" id="SSF54001">
    <property type="entry name" value="Cysteine proteinases"/>
    <property type="match status" value="1"/>
</dbReference>
<dbReference type="PROSITE" id="PS50600">
    <property type="entry name" value="ULP_PROTEASE"/>
    <property type="match status" value="1"/>
</dbReference>
<gene>
    <name type="primary">SENP2</name>
</gene>
<name>SENP2_PONAB</name>